<gene>
    <name evidence="1" type="primary">pyrF</name>
    <name type="ordered locus">bbp_251</name>
</gene>
<comment type="function">
    <text evidence="1">Catalyzes the decarboxylation of orotidine 5'-monophosphate (OMP) to uridine 5'-monophosphate (UMP).</text>
</comment>
<comment type="catalytic activity">
    <reaction evidence="1">
        <text>orotidine 5'-phosphate + H(+) = UMP + CO2</text>
        <dbReference type="Rhea" id="RHEA:11596"/>
        <dbReference type="ChEBI" id="CHEBI:15378"/>
        <dbReference type="ChEBI" id="CHEBI:16526"/>
        <dbReference type="ChEBI" id="CHEBI:57538"/>
        <dbReference type="ChEBI" id="CHEBI:57865"/>
        <dbReference type="EC" id="4.1.1.23"/>
    </reaction>
</comment>
<comment type="pathway">
    <text evidence="1">Pyrimidine metabolism; UMP biosynthesis via de novo pathway; UMP from orotate: step 2/2.</text>
</comment>
<comment type="subunit">
    <text evidence="1">Homodimer.</text>
</comment>
<comment type="similarity">
    <text evidence="1">Belongs to the OMP decarboxylase family. Type 1 subfamily.</text>
</comment>
<sequence length="236" mass="26565">MHLKSNFKNINIIIALDFFDENKAMKFIYNLNPTIYALKIGNIMFTLFGVRFIKILQKLGFKIFLDLKFYDIPNTIFGAIQAVANLNIWMVSIHISGGIQMLKSARLALKPFKNKPLLMGVTILTSLDKTDMSKLGIQISLSKYILSLAKIAHKCNLDGIICSGTEISNIKKHINVKNFKILTPGIRLNGCSSNDQKNVTTPMLAKQYNVDYIIIGRIVTSSQNPLKTLELIRSQI</sequence>
<dbReference type="EC" id="4.1.1.23" evidence="1"/>
<dbReference type="EMBL" id="AE016826">
    <property type="protein sequence ID" value="AAO26978.1"/>
    <property type="molecule type" value="Genomic_DNA"/>
</dbReference>
<dbReference type="RefSeq" id="WP_011091379.1">
    <property type="nucleotide sequence ID" value="NC_004545.1"/>
</dbReference>
<dbReference type="SMR" id="Q89AL6"/>
<dbReference type="STRING" id="224915.bbp_251"/>
<dbReference type="KEGG" id="bab:bbp_251"/>
<dbReference type="eggNOG" id="COG0284">
    <property type="taxonomic scope" value="Bacteria"/>
</dbReference>
<dbReference type="HOGENOM" id="CLU_067069_0_0_6"/>
<dbReference type="OrthoDB" id="9806203at2"/>
<dbReference type="UniPathway" id="UPA00070">
    <property type="reaction ID" value="UER00120"/>
</dbReference>
<dbReference type="Proteomes" id="UP000000601">
    <property type="component" value="Chromosome"/>
</dbReference>
<dbReference type="GO" id="GO:0005829">
    <property type="term" value="C:cytosol"/>
    <property type="evidence" value="ECO:0007669"/>
    <property type="project" value="TreeGrafter"/>
</dbReference>
<dbReference type="GO" id="GO:0004590">
    <property type="term" value="F:orotidine-5'-phosphate decarboxylase activity"/>
    <property type="evidence" value="ECO:0007669"/>
    <property type="project" value="UniProtKB-UniRule"/>
</dbReference>
<dbReference type="GO" id="GO:0006207">
    <property type="term" value="P:'de novo' pyrimidine nucleobase biosynthetic process"/>
    <property type="evidence" value="ECO:0007669"/>
    <property type="project" value="InterPro"/>
</dbReference>
<dbReference type="GO" id="GO:0044205">
    <property type="term" value="P:'de novo' UMP biosynthetic process"/>
    <property type="evidence" value="ECO:0007669"/>
    <property type="project" value="UniProtKB-UniRule"/>
</dbReference>
<dbReference type="CDD" id="cd04725">
    <property type="entry name" value="OMP_decarboxylase_like"/>
    <property type="match status" value="1"/>
</dbReference>
<dbReference type="FunFam" id="3.20.20.70:FF:000015">
    <property type="entry name" value="Orotidine 5'-phosphate decarboxylase"/>
    <property type="match status" value="1"/>
</dbReference>
<dbReference type="Gene3D" id="3.20.20.70">
    <property type="entry name" value="Aldolase class I"/>
    <property type="match status" value="1"/>
</dbReference>
<dbReference type="HAMAP" id="MF_01200_B">
    <property type="entry name" value="OMPdecase_type1_B"/>
    <property type="match status" value="1"/>
</dbReference>
<dbReference type="InterPro" id="IPR013785">
    <property type="entry name" value="Aldolase_TIM"/>
</dbReference>
<dbReference type="InterPro" id="IPR014732">
    <property type="entry name" value="OMPdecase"/>
</dbReference>
<dbReference type="InterPro" id="IPR018089">
    <property type="entry name" value="OMPdecase_AS"/>
</dbReference>
<dbReference type="InterPro" id="IPR047596">
    <property type="entry name" value="OMPdecase_bac"/>
</dbReference>
<dbReference type="InterPro" id="IPR001754">
    <property type="entry name" value="OMPdeCOase_dom"/>
</dbReference>
<dbReference type="InterPro" id="IPR011060">
    <property type="entry name" value="RibuloseP-bd_barrel"/>
</dbReference>
<dbReference type="NCBIfam" id="NF001273">
    <property type="entry name" value="PRK00230.1"/>
    <property type="match status" value="1"/>
</dbReference>
<dbReference type="NCBIfam" id="TIGR01740">
    <property type="entry name" value="pyrF"/>
    <property type="match status" value="1"/>
</dbReference>
<dbReference type="PANTHER" id="PTHR32119">
    <property type="entry name" value="OROTIDINE 5'-PHOSPHATE DECARBOXYLASE"/>
    <property type="match status" value="1"/>
</dbReference>
<dbReference type="PANTHER" id="PTHR32119:SF2">
    <property type="entry name" value="OROTIDINE 5'-PHOSPHATE DECARBOXYLASE"/>
    <property type="match status" value="1"/>
</dbReference>
<dbReference type="Pfam" id="PF00215">
    <property type="entry name" value="OMPdecase"/>
    <property type="match status" value="1"/>
</dbReference>
<dbReference type="SMART" id="SM00934">
    <property type="entry name" value="OMPdecase"/>
    <property type="match status" value="1"/>
</dbReference>
<dbReference type="SUPFAM" id="SSF51366">
    <property type="entry name" value="Ribulose-phoshate binding barrel"/>
    <property type="match status" value="1"/>
</dbReference>
<dbReference type="PROSITE" id="PS00156">
    <property type="entry name" value="OMPDECASE"/>
    <property type="match status" value="1"/>
</dbReference>
<reference key="1">
    <citation type="journal article" date="2003" name="Proc. Natl. Acad. Sci. U.S.A.">
        <title>Reductive genome evolution in Buchnera aphidicola.</title>
        <authorList>
            <person name="van Ham R.C.H.J."/>
            <person name="Kamerbeek J."/>
            <person name="Palacios C."/>
            <person name="Rausell C."/>
            <person name="Abascal F."/>
            <person name="Bastolla U."/>
            <person name="Fernandez J.M."/>
            <person name="Jimenez L."/>
            <person name="Postigo M."/>
            <person name="Silva F.J."/>
            <person name="Tamames J."/>
            <person name="Viguera E."/>
            <person name="Latorre A."/>
            <person name="Valencia A."/>
            <person name="Moran F."/>
            <person name="Moya A."/>
        </authorList>
    </citation>
    <scope>NUCLEOTIDE SEQUENCE [LARGE SCALE GENOMIC DNA]</scope>
    <source>
        <strain>Bp</strain>
    </source>
</reference>
<name>PYRF_BUCBP</name>
<accession>Q89AL6</accession>
<feature type="chain" id="PRO_0000134534" description="Orotidine 5'-phosphate decarboxylase">
    <location>
        <begin position="1"/>
        <end position="236"/>
    </location>
</feature>
<feature type="active site" description="Proton donor" evidence="1">
    <location>
        <position position="68"/>
    </location>
</feature>
<feature type="binding site" evidence="1">
    <location>
        <position position="17"/>
    </location>
    <ligand>
        <name>substrate</name>
    </ligand>
</feature>
<feature type="binding site" evidence="1">
    <location>
        <position position="39"/>
    </location>
    <ligand>
        <name>substrate</name>
    </ligand>
</feature>
<feature type="binding site" evidence="1">
    <location>
        <begin position="66"/>
        <end position="75"/>
    </location>
    <ligand>
        <name>substrate</name>
    </ligand>
</feature>
<feature type="binding site" evidence="1">
    <location>
        <position position="125"/>
    </location>
    <ligand>
        <name>substrate</name>
    </ligand>
</feature>
<feature type="binding site" evidence="1">
    <location>
        <position position="187"/>
    </location>
    <ligand>
        <name>substrate</name>
    </ligand>
</feature>
<feature type="binding site" evidence="1">
    <location>
        <position position="196"/>
    </location>
    <ligand>
        <name>substrate</name>
    </ligand>
</feature>
<feature type="binding site" evidence="1">
    <location>
        <position position="216"/>
    </location>
    <ligand>
        <name>substrate</name>
    </ligand>
</feature>
<feature type="binding site" evidence="1">
    <location>
        <position position="217"/>
    </location>
    <ligand>
        <name>substrate</name>
    </ligand>
</feature>
<proteinExistence type="inferred from homology"/>
<evidence type="ECO:0000255" key="1">
    <source>
        <dbReference type="HAMAP-Rule" id="MF_01200"/>
    </source>
</evidence>
<keyword id="KW-0210">Decarboxylase</keyword>
<keyword id="KW-0456">Lyase</keyword>
<keyword id="KW-0665">Pyrimidine biosynthesis</keyword>
<keyword id="KW-1185">Reference proteome</keyword>
<organism>
    <name type="scientific">Buchnera aphidicola subsp. Baizongia pistaciae (strain Bp)</name>
    <dbReference type="NCBI Taxonomy" id="224915"/>
    <lineage>
        <taxon>Bacteria</taxon>
        <taxon>Pseudomonadati</taxon>
        <taxon>Pseudomonadota</taxon>
        <taxon>Gammaproteobacteria</taxon>
        <taxon>Enterobacterales</taxon>
        <taxon>Erwiniaceae</taxon>
        <taxon>Buchnera</taxon>
    </lineage>
</organism>
<protein>
    <recommendedName>
        <fullName evidence="1">Orotidine 5'-phosphate decarboxylase</fullName>
        <ecNumber evidence="1">4.1.1.23</ecNumber>
    </recommendedName>
    <alternativeName>
        <fullName evidence="1">OMP decarboxylase</fullName>
        <shortName evidence="1">OMPDCase</shortName>
        <shortName evidence="1">OMPdecase</shortName>
    </alternativeName>
</protein>